<keyword id="KW-0456">Lyase</keyword>
<keyword id="KW-0460">Magnesium</keyword>
<keyword id="KW-0474">Menaquinone biosynthesis</keyword>
<keyword id="KW-0479">Metal-binding</keyword>
<evidence type="ECO:0000255" key="1">
    <source>
        <dbReference type="HAMAP-Rule" id="MF_00470"/>
    </source>
</evidence>
<feature type="chain" id="PRO_1000013799" description="o-succinylbenzoate synthase">
    <location>
        <begin position="1"/>
        <end position="320"/>
    </location>
</feature>
<feature type="active site" description="Proton donor" evidence="1">
    <location>
        <position position="133"/>
    </location>
</feature>
<feature type="active site" description="Proton acceptor" evidence="1">
    <location>
        <position position="235"/>
    </location>
</feature>
<feature type="binding site" evidence="1">
    <location>
        <position position="161"/>
    </location>
    <ligand>
        <name>Mg(2+)</name>
        <dbReference type="ChEBI" id="CHEBI:18420"/>
    </ligand>
</feature>
<feature type="binding site" evidence="1">
    <location>
        <position position="190"/>
    </location>
    <ligand>
        <name>Mg(2+)</name>
        <dbReference type="ChEBI" id="CHEBI:18420"/>
    </ligand>
</feature>
<feature type="binding site" evidence="1">
    <location>
        <position position="213"/>
    </location>
    <ligand>
        <name>Mg(2+)</name>
        <dbReference type="ChEBI" id="CHEBI:18420"/>
    </ligand>
</feature>
<gene>
    <name evidence="1" type="primary">menC</name>
    <name type="ordered locus">ECP_2305</name>
</gene>
<organism>
    <name type="scientific">Escherichia coli O6:K15:H31 (strain 536 / UPEC)</name>
    <dbReference type="NCBI Taxonomy" id="362663"/>
    <lineage>
        <taxon>Bacteria</taxon>
        <taxon>Pseudomonadati</taxon>
        <taxon>Pseudomonadota</taxon>
        <taxon>Gammaproteobacteria</taxon>
        <taxon>Enterobacterales</taxon>
        <taxon>Enterobacteriaceae</taxon>
        <taxon>Escherichia</taxon>
    </lineage>
</organism>
<protein>
    <recommendedName>
        <fullName evidence="1">o-succinylbenzoate synthase</fullName>
        <shortName evidence="1">OSB synthase</shortName>
        <shortName evidence="1">OSBS</shortName>
        <ecNumber evidence="1">4.2.1.113</ecNumber>
    </recommendedName>
    <alternativeName>
        <fullName evidence="1">4-(2'-carboxyphenyl)-4-oxybutyric acid synthase</fullName>
    </alternativeName>
    <alternativeName>
        <fullName evidence="1">o-succinylbenzoic acid synthase</fullName>
    </alternativeName>
</protein>
<sequence>MRSAQVYRWQIPMDAGVVLRDRRLKTRDGLYVCLREGEREGWGEISPLPGFSQETWEDAQSVLLAWVNNWLAGDCELPQMPSVAFGVSCALAELAETLPQAANYRAAPLCNGDPDDLILKLADMPGEKVAKVKVGLYEAVRDGMVVNLLLEAIPDLHLRLDANRAWTPLKGQQFAKYVNPDYRHRIAFLEEPCKTRDDSRAFARETDIAIAWDESLREPDFAFVAEEGVRAVVIKPTLTGSLEKVREQVKAAHALGLTAVISSSIESSLGLTQLARIAAWLTPDTIPGLDTLDLMQAQQVRRWPGSPLPLVDVDALERLL</sequence>
<accession>Q0TFI0</accession>
<comment type="function">
    <text evidence="1">Converts 2-succinyl-6-hydroxy-2,4-cyclohexadiene-1-carboxylate (SHCHC) to 2-succinylbenzoate (OSB).</text>
</comment>
<comment type="catalytic activity">
    <reaction evidence="1">
        <text>(1R,6R)-6-hydroxy-2-succinyl-cyclohexa-2,4-diene-1-carboxylate = 2-succinylbenzoate + H2O</text>
        <dbReference type="Rhea" id="RHEA:10196"/>
        <dbReference type="ChEBI" id="CHEBI:15377"/>
        <dbReference type="ChEBI" id="CHEBI:18325"/>
        <dbReference type="ChEBI" id="CHEBI:58689"/>
        <dbReference type="EC" id="4.2.1.113"/>
    </reaction>
</comment>
<comment type="cofactor">
    <cofactor evidence="1">
        <name>a divalent metal cation</name>
        <dbReference type="ChEBI" id="CHEBI:60240"/>
    </cofactor>
</comment>
<comment type="pathway">
    <text evidence="1">Quinol/quinone metabolism; 1,4-dihydroxy-2-naphthoate biosynthesis; 1,4-dihydroxy-2-naphthoate from chorismate: step 4/7.</text>
</comment>
<comment type="pathway">
    <text evidence="1">Quinol/quinone metabolism; menaquinone biosynthesis.</text>
</comment>
<comment type="similarity">
    <text evidence="1">Belongs to the mandelate racemase/muconate lactonizing enzyme family. MenC type 1 subfamily.</text>
</comment>
<dbReference type="EC" id="4.2.1.113" evidence="1"/>
<dbReference type="EMBL" id="CP000247">
    <property type="protein sequence ID" value="ABG70299.1"/>
    <property type="molecule type" value="Genomic_DNA"/>
</dbReference>
<dbReference type="RefSeq" id="WP_001255594.1">
    <property type="nucleotide sequence ID" value="NC_008253.1"/>
</dbReference>
<dbReference type="SMR" id="Q0TFI0"/>
<dbReference type="KEGG" id="ecp:ECP_2305"/>
<dbReference type="HOGENOM" id="CLU_030273_0_1_6"/>
<dbReference type="UniPathway" id="UPA00079"/>
<dbReference type="UniPathway" id="UPA01057">
    <property type="reaction ID" value="UER00165"/>
</dbReference>
<dbReference type="Proteomes" id="UP000009182">
    <property type="component" value="Chromosome"/>
</dbReference>
<dbReference type="GO" id="GO:0000287">
    <property type="term" value="F:magnesium ion binding"/>
    <property type="evidence" value="ECO:0007669"/>
    <property type="project" value="UniProtKB-UniRule"/>
</dbReference>
<dbReference type="GO" id="GO:0043748">
    <property type="term" value="F:O-succinylbenzoate synthase activity"/>
    <property type="evidence" value="ECO:0007669"/>
    <property type="project" value="UniProtKB-EC"/>
</dbReference>
<dbReference type="GO" id="GO:0009234">
    <property type="term" value="P:menaquinone biosynthetic process"/>
    <property type="evidence" value="ECO:0007669"/>
    <property type="project" value="UniProtKB-UniRule"/>
</dbReference>
<dbReference type="CDD" id="cd03320">
    <property type="entry name" value="OSBS"/>
    <property type="match status" value="1"/>
</dbReference>
<dbReference type="FunFam" id="3.20.20.120:FF:000006">
    <property type="entry name" value="o-succinylbenzoate synthase"/>
    <property type="match status" value="1"/>
</dbReference>
<dbReference type="FunFam" id="3.30.390.10:FF:000005">
    <property type="entry name" value="o-succinylbenzoate synthase"/>
    <property type="match status" value="1"/>
</dbReference>
<dbReference type="Gene3D" id="3.20.20.120">
    <property type="entry name" value="Enolase-like C-terminal domain"/>
    <property type="match status" value="1"/>
</dbReference>
<dbReference type="Gene3D" id="3.30.390.10">
    <property type="entry name" value="Enolase-like, N-terminal domain"/>
    <property type="match status" value="1"/>
</dbReference>
<dbReference type="HAMAP" id="MF_00470">
    <property type="entry name" value="MenC_1"/>
    <property type="match status" value="1"/>
</dbReference>
<dbReference type="InterPro" id="IPR036849">
    <property type="entry name" value="Enolase-like_C_sf"/>
</dbReference>
<dbReference type="InterPro" id="IPR029017">
    <property type="entry name" value="Enolase-like_N"/>
</dbReference>
<dbReference type="InterPro" id="IPR029065">
    <property type="entry name" value="Enolase_C-like"/>
</dbReference>
<dbReference type="InterPro" id="IPR013342">
    <property type="entry name" value="Mandelate_racemase_C"/>
</dbReference>
<dbReference type="InterPro" id="IPR010196">
    <property type="entry name" value="OSB_synthase_MenC1"/>
</dbReference>
<dbReference type="InterPro" id="IPR041338">
    <property type="entry name" value="OSBS_N"/>
</dbReference>
<dbReference type="NCBIfam" id="TIGR01927">
    <property type="entry name" value="menC_gam_Gplu"/>
    <property type="match status" value="1"/>
</dbReference>
<dbReference type="NCBIfam" id="NF003473">
    <property type="entry name" value="PRK05105.1"/>
    <property type="match status" value="1"/>
</dbReference>
<dbReference type="PANTHER" id="PTHR48073:SF2">
    <property type="entry name" value="O-SUCCINYLBENZOATE SYNTHASE"/>
    <property type="match status" value="1"/>
</dbReference>
<dbReference type="PANTHER" id="PTHR48073">
    <property type="entry name" value="O-SUCCINYLBENZOATE SYNTHASE-RELATED"/>
    <property type="match status" value="1"/>
</dbReference>
<dbReference type="Pfam" id="PF21508">
    <property type="entry name" value="MenC_N"/>
    <property type="match status" value="1"/>
</dbReference>
<dbReference type="Pfam" id="PF13378">
    <property type="entry name" value="MR_MLE_C"/>
    <property type="match status" value="1"/>
</dbReference>
<dbReference type="SFLD" id="SFLDG00180">
    <property type="entry name" value="muconate_cycloisomerase"/>
    <property type="match status" value="1"/>
</dbReference>
<dbReference type="SFLD" id="SFLDF00009">
    <property type="entry name" value="o-succinylbenzoate_synthase"/>
    <property type="match status" value="1"/>
</dbReference>
<dbReference type="SMART" id="SM00922">
    <property type="entry name" value="MR_MLE"/>
    <property type="match status" value="1"/>
</dbReference>
<dbReference type="SUPFAM" id="SSF51604">
    <property type="entry name" value="Enolase C-terminal domain-like"/>
    <property type="match status" value="1"/>
</dbReference>
<dbReference type="SUPFAM" id="SSF54826">
    <property type="entry name" value="Enolase N-terminal domain-like"/>
    <property type="match status" value="1"/>
</dbReference>
<name>MENC_ECOL5</name>
<proteinExistence type="inferred from homology"/>
<reference key="1">
    <citation type="journal article" date="2006" name="Mol. Microbiol.">
        <title>Role of pathogenicity island-associated integrases in the genome plasticity of uropathogenic Escherichia coli strain 536.</title>
        <authorList>
            <person name="Hochhut B."/>
            <person name="Wilde C."/>
            <person name="Balling G."/>
            <person name="Middendorf B."/>
            <person name="Dobrindt U."/>
            <person name="Brzuszkiewicz E."/>
            <person name="Gottschalk G."/>
            <person name="Carniel E."/>
            <person name="Hacker J."/>
        </authorList>
    </citation>
    <scope>NUCLEOTIDE SEQUENCE [LARGE SCALE GENOMIC DNA]</scope>
    <source>
        <strain>536 / UPEC</strain>
    </source>
</reference>